<sequence>MKKIIKVEAVEKHFGNQVIIPPLSLDIKEGEFLTILGPSGCGKTTLLRMIAGFETPTKGNLLLDDEKINDLPPYKRHMNLVFQHYALFPHMNVEKNICFGMKMQKVPAAEQKERAEEAMRLTQLLEFRNRKPAKLSGGQQQRVAIARAIVNNPRVLLLDEPLGALDFKLRKDLQRELKNLQRNLGITFIYVTHDQEEAMSMSDRIVVMNKGHIEQIGTPKEIYNKPKTLFVATFIGENNIVKNGEGYVAIRPENVKVRSVEERILKEYHLGHIEDIEFVGNMEKLYVRDEKTSELLMAYQTAEEAAQWSIGDNVYVGWEQEDEVTLN</sequence>
<protein>
    <recommendedName>
        <fullName evidence="1">Spermidine/putrescine import ATP-binding protein PotA</fullName>
        <ecNumber evidence="1">7.6.2.11</ecNumber>
    </recommendedName>
</protein>
<accession>Q6HLQ9</accession>
<proteinExistence type="inferred from homology"/>
<gene>
    <name evidence="1" type="primary">potA</name>
    <name type="ordered locus">BT9727_1177</name>
</gene>
<reference key="1">
    <citation type="journal article" date="2006" name="J. Bacteriol.">
        <title>Pathogenomic sequence analysis of Bacillus cereus and Bacillus thuringiensis isolates closely related to Bacillus anthracis.</title>
        <authorList>
            <person name="Han C.S."/>
            <person name="Xie G."/>
            <person name="Challacombe J.F."/>
            <person name="Altherr M.R."/>
            <person name="Bhotika S.S."/>
            <person name="Bruce D."/>
            <person name="Campbell C.S."/>
            <person name="Campbell M.L."/>
            <person name="Chen J."/>
            <person name="Chertkov O."/>
            <person name="Cleland C."/>
            <person name="Dimitrijevic M."/>
            <person name="Doggett N.A."/>
            <person name="Fawcett J.J."/>
            <person name="Glavina T."/>
            <person name="Goodwin L.A."/>
            <person name="Hill K.K."/>
            <person name="Hitchcock P."/>
            <person name="Jackson P.J."/>
            <person name="Keim P."/>
            <person name="Kewalramani A.R."/>
            <person name="Longmire J."/>
            <person name="Lucas S."/>
            <person name="Malfatti S."/>
            <person name="McMurry K."/>
            <person name="Meincke L.J."/>
            <person name="Misra M."/>
            <person name="Moseman B.L."/>
            <person name="Mundt M."/>
            <person name="Munk A.C."/>
            <person name="Okinaka R.T."/>
            <person name="Parson-Quintana B."/>
            <person name="Reilly L.P."/>
            <person name="Richardson P."/>
            <person name="Robinson D.L."/>
            <person name="Rubin E."/>
            <person name="Saunders E."/>
            <person name="Tapia R."/>
            <person name="Tesmer J.G."/>
            <person name="Thayer N."/>
            <person name="Thompson L.S."/>
            <person name="Tice H."/>
            <person name="Ticknor L.O."/>
            <person name="Wills P.L."/>
            <person name="Brettin T.S."/>
            <person name="Gilna P."/>
        </authorList>
    </citation>
    <scope>NUCLEOTIDE SEQUENCE [LARGE SCALE GENOMIC DNA]</scope>
    <source>
        <strain>97-27</strain>
    </source>
</reference>
<comment type="function">
    <text evidence="1">Part of the ABC transporter complex PotABCD involved in spermidine/putrescine import. Responsible for energy coupling to the transport system.</text>
</comment>
<comment type="catalytic activity">
    <reaction evidence="1">
        <text>ATP + H2O + polyamine-[polyamine-binding protein]Side 1 = ADP + phosphate + polyamineSide 2 + [polyamine-binding protein]Side 1.</text>
        <dbReference type="EC" id="7.6.2.11"/>
    </reaction>
</comment>
<comment type="subunit">
    <text evidence="1">The complex is composed of two ATP-binding proteins (PotA), two transmembrane proteins (PotB and PotC) and a solute-binding protein (PotD).</text>
</comment>
<comment type="subcellular location">
    <subcellularLocation>
        <location evidence="1">Cell membrane</location>
        <topology evidence="1">Peripheral membrane protein</topology>
    </subcellularLocation>
</comment>
<comment type="similarity">
    <text evidence="1">Belongs to the ABC transporter superfamily. Spermidine/putrescine importer (TC 3.A.1.11.1) family.</text>
</comment>
<comment type="sequence caution" evidence="2">
    <conflict type="erroneous initiation">
        <sequence resource="EMBL-CDS" id="AAT62237"/>
    </conflict>
</comment>
<evidence type="ECO:0000255" key="1">
    <source>
        <dbReference type="HAMAP-Rule" id="MF_01726"/>
    </source>
</evidence>
<evidence type="ECO:0000305" key="2"/>
<dbReference type="EC" id="7.6.2.11" evidence="1"/>
<dbReference type="EMBL" id="AE017355">
    <property type="protein sequence ID" value="AAT62237.1"/>
    <property type="status" value="ALT_INIT"/>
    <property type="molecule type" value="Genomic_DNA"/>
</dbReference>
<dbReference type="RefSeq" id="WP_000720321.1">
    <property type="nucleotide sequence ID" value="NC_005957.1"/>
</dbReference>
<dbReference type="RefSeq" id="YP_035512.1">
    <property type="nucleotide sequence ID" value="NC_005957.1"/>
</dbReference>
<dbReference type="SMR" id="Q6HLQ9"/>
<dbReference type="KEGG" id="btk:BT9727_1177"/>
<dbReference type="PATRIC" id="fig|281309.8.peg.1239"/>
<dbReference type="HOGENOM" id="CLU_000604_1_1_9"/>
<dbReference type="Proteomes" id="UP000001301">
    <property type="component" value="Chromosome"/>
</dbReference>
<dbReference type="GO" id="GO:0043190">
    <property type="term" value="C:ATP-binding cassette (ABC) transporter complex"/>
    <property type="evidence" value="ECO:0007669"/>
    <property type="project" value="InterPro"/>
</dbReference>
<dbReference type="GO" id="GO:0015594">
    <property type="term" value="F:ABC-type putrescine transporter activity"/>
    <property type="evidence" value="ECO:0007669"/>
    <property type="project" value="InterPro"/>
</dbReference>
<dbReference type="GO" id="GO:0005524">
    <property type="term" value="F:ATP binding"/>
    <property type="evidence" value="ECO:0007669"/>
    <property type="project" value="UniProtKB-KW"/>
</dbReference>
<dbReference type="GO" id="GO:0016887">
    <property type="term" value="F:ATP hydrolysis activity"/>
    <property type="evidence" value="ECO:0007669"/>
    <property type="project" value="InterPro"/>
</dbReference>
<dbReference type="CDD" id="cd03300">
    <property type="entry name" value="ABC_PotA_N"/>
    <property type="match status" value="1"/>
</dbReference>
<dbReference type="FunFam" id="3.40.50.300:FF:000133">
    <property type="entry name" value="Spermidine/putrescine import ATP-binding protein PotA"/>
    <property type="match status" value="1"/>
</dbReference>
<dbReference type="Gene3D" id="3.40.50.300">
    <property type="entry name" value="P-loop containing nucleotide triphosphate hydrolases"/>
    <property type="match status" value="1"/>
</dbReference>
<dbReference type="InterPro" id="IPR003593">
    <property type="entry name" value="AAA+_ATPase"/>
</dbReference>
<dbReference type="InterPro" id="IPR050093">
    <property type="entry name" value="ABC_SmlMolc_Importer"/>
</dbReference>
<dbReference type="InterPro" id="IPR003439">
    <property type="entry name" value="ABC_transporter-like_ATP-bd"/>
</dbReference>
<dbReference type="InterPro" id="IPR017871">
    <property type="entry name" value="ABC_transporter-like_CS"/>
</dbReference>
<dbReference type="InterPro" id="IPR008995">
    <property type="entry name" value="Mo/tungstate-bd_C_term_dom"/>
</dbReference>
<dbReference type="InterPro" id="IPR027417">
    <property type="entry name" value="P-loop_NTPase"/>
</dbReference>
<dbReference type="InterPro" id="IPR017879">
    <property type="entry name" value="PotA_ATP-bd"/>
</dbReference>
<dbReference type="InterPro" id="IPR013611">
    <property type="entry name" value="Transp-assoc_OB_typ2"/>
</dbReference>
<dbReference type="PANTHER" id="PTHR42781">
    <property type="entry name" value="SPERMIDINE/PUTRESCINE IMPORT ATP-BINDING PROTEIN POTA"/>
    <property type="match status" value="1"/>
</dbReference>
<dbReference type="PANTHER" id="PTHR42781:SF4">
    <property type="entry name" value="SPERMIDINE_PUTRESCINE IMPORT ATP-BINDING PROTEIN POTA"/>
    <property type="match status" value="1"/>
</dbReference>
<dbReference type="Pfam" id="PF00005">
    <property type="entry name" value="ABC_tran"/>
    <property type="match status" value="1"/>
</dbReference>
<dbReference type="Pfam" id="PF08402">
    <property type="entry name" value="TOBE_2"/>
    <property type="match status" value="1"/>
</dbReference>
<dbReference type="SMART" id="SM00382">
    <property type="entry name" value="AAA"/>
    <property type="match status" value="1"/>
</dbReference>
<dbReference type="SUPFAM" id="SSF50331">
    <property type="entry name" value="MOP-like"/>
    <property type="match status" value="1"/>
</dbReference>
<dbReference type="SUPFAM" id="SSF52540">
    <property type="entry name" value="P-loop containing nucleoside triphosphate hydrolases"/>
    <property type="match status" value="1"/>
</dbReference>
<dbReference type="PROSITE" id="PS00211">
    <property type="entry name" value="ABC_TRANSPORTER_1"/>
    <property type="match status" value="1"/>
</dbReference>
<dbReference type="PROSITE" id="PS50893">
    <property type="entry name" value="ABC_TRANSPORTER_2"/>
    <property type="match status" value="1"/>
</dbReference>
<dbReference type="PROSITE" id="PS51305">
    <property type="entry name" value="POTA"/>
    <property type="match status" value="1"/>
</dbReference>
<name>POTA_BACHK</name>
<feature type="chain" id="PRO_0000286196" description="Spermidine/putrescine import ATP-binding protein PotA">
    <location>
        <begin position="1"/>
        <end position="327"/>
    </location>
</feature>
<feature type="domain" description="ABC transporter" evidence="1">
    <location>
        <begin position="5"/>
        <end position="235"/>
    </location>
</feature>
<feature type="binding site" evidence="1">
    <location>
        <begin position="37"/>
        <end position="44"/>
    </location>
    <ligand>
        <name>ATP</name>
        <dbReference type="ChEBI" id="CHEBI:30616"/>
    </ligand>
</feature>
<keyword id="KW-0067">ATP-binding</keyword>
<keyword id="KW-1003">Cell membrane</keyword>
<keyword id="KW-0472">Membrane</keyword>
<keyword id="KW-0547">Nucleotide-binding</keyword>
<keyword id="KW-1278">Translocase</keyword>
<keyword id="KW-0813">Transport</keyword>
<organism>
    <name type="scientific">Bacillus thuringiensis subsp. konkukian (strain 97-27)</name>
    <dbReference type="NCBI Taxonomy" id="281309"/>
    <lineage>
        <taxon>Bacteria</taxon>
        <taxon>Bacillati</taxon>
        <taxon>Bacillota</taxon>
        <taxon>Bacilli</taxon>
        <taxon>Bacillales</taxon>
        <taxon>Bacillaceae</taxon>
        <taxon>Bacillus</taxon>
        <taxon>Bacillus cereus group</taxon>
    </lineage>
</organism>